<reference key="1">
    <citation type="journal article" date="2002" name="Nucleic Acids Res.">
        <title>Genome sequence of Oceanobacillus iheyensis isolated from the Iheya Ridge and its unexpected adaptive capabilities to extreme environments.</title>
        <authorList>
            <person name="Takami H."/>
            <person name="Takaki Y."/>
            <person name="Uchiyama I."/>
        </authorList>
    </citation>
    <scope>NUCLEOTIDE SEQUENCE [LARGE SCALE GENOMIC DNA]</scope>
    <source>
        <strain>DSM 14371 / CIP 107618 / JCM 11309 / KCTC 3954 / HTE831</strain>
    </source>
</reference>
<organism>
    <name type="scientific">Oceanobacillus iheyensis (strain DSM 14371 / CIP 107618 / JCM 11309 / KCTC 3954 / HTE831)</name>
    <dbReference type="NCBI Taxonomy" id="221109"/>
    <lineage>
        <taxon>Bacteria</taxon>
        <taxon>Bacillati</taxon>
        <taxon>Bacillota</taxon>
        <taxon>Bacilli</taxon>
        <taxon>Bacillales</taxon>
        <taxon>Bacillaceae</taxon>
        <taxon>Oceanobacillus</taxon>
    </lineage>
</organism>
<feature type="chain" id="PRO_0000096073" description="Single-stranded DNA-binding protein">
    <location>
        <begin position="1"/>
        <end position="161"/>
    </location>
</feature>
<feature type="domain" description="SSB" evidence="1">
    <location>
        <begin position="1"/>
        <end position="104"/>
    </location>
</feature>
<feature type="region of interest" description="Disordered" evidence="2">
    <location>
        <begin position="106"/>
        <end position="161"/>
    </location>
</feature>
<feature type="short sequence motif" description="Important for interaction with partner proteins" evidence="1">
    <location>
        <begin position="156"/>
        <end position="161"/>
    </location>
</feature>
<feature type="compositionally biased region" description="Low complexity" evidence="2">
    <location>
        <begin position="115"/>
        <end position="139"/>
    </location>
</feature>
<dbReference type="EMBL" id="BA000028">
    <property type="protein sequence ID" value="BAC15434.1"/>
    <property type="molecule type" value="Genomic_DNA"/>
</dbReference>
<dbReference type="RefSeq" id="WP_011067876.1">
    <property type="nucleotide sequence ID" value="NC_004193.1"/>
</dbReference>
<dbReference type="SMR" id="Q8CX55"/>
<dbReference type="STRING" id="221109.gene:10735730"/>
<dbReference type="KEGG" id="oih:OB3478"/>
<dbReference type="eggNOG" id="COG0629">
    <property type="taxonomic scope" value="Bacteria"/>
</dbReference>
<dbReference type="HOGENOM" id="CLU_078758_6_2_9"/>
<dbReference type="OrthoDB" id="9809878at2"/>
<dbReference type="PhylomeDB" id="Q8CX55"/>
<dbReference type="Proteomes" id="UP000000822">
    <property type="component" value="Chromosome"/>
</dbReference>
<dbReference type="GO" id="GO:0009295">
    <property type="term" value="C:nucleoid"/>
    <property type="evidence" value="ECO:0007669"/>
    <property type="project" value="TreeGrafter"/>
</dbReference>
<dbReference type="GO" id="GO:0003697">
    <property type="term" value="F:single-stranded DNA binding"/>
    <property type="evidence" value="ECO:0007669"/>
    <property type="project" value="UniProtKB-UniRule"/>
</dbReference>
<dbReference type="GO" id="GO:0006310">
    <property type="term" value="P:DNA recombination"/>
    <property type="evidence" value="ECO:0007669"/>
    <property type="project" value="UniProtKB-UniRule"/>
</dbReference>
<dbReference type="GO" id="GO:0006281">
    <property type="term" value="P:DNA repair"/>
    <property type="evidence" value="ECO:0007669"/>
    <property type="project" value="UniProtKB-UniRule"/>
</dbReference>
<dbReference type="GO" id="GO:0006260">
    <property type="term" value="P:DNA replication"/>
    <property type="evidence" value="ECO:0007669"/>
    <property type="project" value="UniProtKB-UniRule"/>
</dbReference>
<dbReference type="CDD" id="cd04496">
    <property type="entry name" value="SSB_OBF"/>
    <property type="match status" value="1"/>
</dbReference>
<dbReference type="FunFam" id="2.40.50.140:FF:000084">
    <property type="entry name" value="Single-stranded DNA-binding protein"/>
    <property type="match status" value="1"/>
</dbReference>
<dbReference type="Gene3D" id="2.40.50.140">
    <property type="entry name" value="Nucleic acid-binding proteins"/>
    <property type="match status" value="1"/>
</dbReference>
<dbReference type="HAMAP" id="MF_00984">
    <property type="entry name" value="SSB"/>
    <property type="match status" value="1"/>
</dbReference>
<dbReference type="InterPro" id="IPR012340">
    <property type="entry name" value="NA-bd_OB-fold"/>
</dbReference>
<dbReference type="InterPro" id="IPR000424">
    <property type="entry name" value="Primosome_PriB/ssb"/>
</dbReference>
<dbReference type="InterPro" id="IPR011344">
    <property type="entry name" value="ssDNA-bd"/>
</dbReference>
<dbReference type="NCBIfam" id="TIGR00621">
    <property type="entry name" value="ssb"/>
    <property type="match status" value="1"/>
</dbReference>
<dbReference type="PANTHER" id="PTHR10302">
    <property type="entry name" value="SINGLE-STRANDED DNA-BINDING PROTEIN"/>
    <property type="match status" value="1"/>
</dbReference>
<dbReference type="PANTHER" id="PTHR10302:SF27">
    <property type="entry name" value="SINGLE-STRANDED DNA-BINDING PROTEIN"/>
    <property type="match status" value="1"/>
</dbReference>
<dbReference type="Pfam" id="PF00436">
    <property type="entry name" value="SSB"/>
    <property type="match status" value="1"/>
</dbReference>
<dbReference type="PIRSF" id="PIRSF002070">
    <property type="entry name" value="SSB"/>
    <property type="match status" value="1"/>
</dbReference>
<dbReference type="SUPFAM" id="SSF50249">
    <property type="entry name" value="Nucleic acid-binding proteins"/>
    <property type="match status" value="1"/>
</dbReference>
<dbReference type="PROSITE" id="PS50935">
    <property type="entry name" value="SSB"/>
    <property type="match status" value="1"/>
</dbReference>
<gene>
    <name type="primary">ssb</name>
    <name type="ordered locus">OB3478</name>
</gene>
<name>SSB_OCEIH</name>
<comment type="function">
    <text evidence="1">Plays an important role in DNA replication, recombination and repair. Binds to ssDNA and to an array of partner proteins to recruit them to their sites of action during DNA metabolism.</text>
</comment>
<comment type="subunit">
    <text evidence="1">Homotetramer.</text>
</comment>
<accession>Q8CX55</accession>
<keyword id="KW-0227">DNA damage</keyword>
<keyword id="KW-0233">DNA recombination</keyword>
<keyword id="KW-0234">DNA repair</keyword>
<keyword id="KW-0235">DNA replication</keyword>
<keyword id="KW-0238">DNA-binding</keyword>
<keyword id="KW-1185">Reference proteome</keyword>
<proteinExistence type="inferred from homology"/>
<sequence>MLNRVVLVGRLTRDPDLRYTPNGVAVANFNIAVNRPFSNQQGNREADFINCVIWRRPAENLANYMKKGSMVGVDGRIQTRNFEGQDGKTVYVTEVVADSVQFLETKGSQGGQDSSGGYQQNRNQNQYQNQNQYASNQNQDQEDPFKNNGEPIDISDDDLPF</sequence>
<evidence type="ECO:0000255" key="1">
    <source>
        <dbReference type="HAMAP-Rule" id="MF_00984"/>
    </source>
</evidence>
<evidence type="ECO:0000256" key="2">
    <source>
        <dbReference type="SAM" id="MobiDB-lite"/>
    </source>
</evidence>
<protein>
    <recommendedName>
        <fullName evidence="1">Single-stranded DNA-binding protein</fullName>
        <shortName evidence="1">SSB</shortName>
    </recommendedName>
</protein>